<organism>
    <name type="scientific">Haloferax volcanii (strain ATCC 29605 / DSM 3757 / JCM 8879 / NBRC 14742 / NCIMB 2012 / VKM B-1768 / DS2)</name>
    <name type="common">Halobacterium volcanii</name>
    <dbReference type="NCBI Taxonomy" id="309800"/>
    <lineage>
        <taxon>Archaea</taxon>
        <taxon>Methanobacteriati</taxon>
        <taxon>Methanobacteriota</taxon>
        <taxon>Stenosarchaea group</taxon>
        <taxon>Halobacteria</taxon>
        <taxon>Halobacteriales</taxon>
        <taxon>Haloferacaceae</taxon>
        <taxon>Haloferax</taxon>
    </lineage>
</organism>
<proteinExistence type="evidence at protein level"/>
<accession>D4GP39</accession>
<accession>L9VI55</accession>
<feature type="chain" id="PRO_0000449390" description="Xylose/arabinose import ATP-binding protein XacK">
    <location>
        <begin position="1"/>
        <end position="383"/>
    </location>
</feature>
<feature type="domain" description="ABC transporter" evidence="1">
    <location>
        <begin position="4"/>
        <end position="240"/>
    </location>
</feature>
<feature type="binding site" evidence="1">
    <location>
        <begin position="41"/>
        <end position="48"/>
    </location>
    <ligand>
        <name>ATP</name>
        <dbReference type="ChEBI" id="CHEBI:30616"/>
    </ligand>
</feature>
<evidence type="ECO:0000255" key="1">
    <source>
        <dbReference type="PROSITE-ProRule" id="PRU00434"/>
    </source>
</evidence>
<evidence type="ECO:0000269" key="2">
    <source>
    </source>
</evidence>
<evidence type="ECO:0000303" key="3">
    <source>
    </source>
</evidence>
<evidence type="ECO:0000305" key="4"/>
<evidence type="ECO:0000305" key="5">
    <source>
    </source>
</evidence>
<evidence type="ECO:0000312" key="6">
    <source>
        <dbReference type="EMBL" id="ADE01437.1"/>
    </source>
</evidence>
<geneLocation type="plasmid">
    <name>pHV3</name>
</geneLocation>
<keyword id="KW-0067">ATP-binding</keyword>
<keyword id="KW-1003">Cell membrane</keyword>
<keyword id="KW-0472">Membrane</keyword>
<keyword id="KW-0547">Nucleotide-binding</keyword>
<keyword id="KW-0614">Plasmid</keyword>
<keyword id="KW-1185">Reference proteome</keyword>
<keyword id="KW-0762">Sugar transport</keyword>
<keyword id="KW-1278">Translocase</keyword>
<keyword id="KW-0813">Transport</keyword>
<name>XACK_HALVD</name>
<gene>
    <name evidence="3" type="primary">xacK</name>
    <name evidence="6" type="synonym">tsgD7</name>
    <name evidence="6" type="ordered locus">HVO_B0038</name>
</gene>
<comment type="function">
    <text evidence="2 4">Part of the ABC transporter complex XacGHIJK involved in the uptake of xylose and arabinose (PubMed:31089701). Responsible for energy coupling to the transport system (Probable).</text>
</comment>
<comment type="catalytic activity">
    <reaction evidence="2">
        <text>D-xylose(out) + ATP + H2O = D-xylose(in) + ADP + phosphate + H(+)</text>
        <dbReference type="Rhea" id="RHEA:29899"/>
        <dbReference type="ChEBI" id="CHEBI:15377"/>
        <dbReference type="ChEBI" id="CHEBI:15378"/>
        <dbReference type="ChEBI" id="CHEBI:30616"/>
        <dbReference type="ChEBI" id="CHEBI:43474"/>
        <dbReference type="ChEBI" id="CHEBI:53455"/>
        <dbReference type="ChEBI" id="CHEBI:456216"/>
        <dbReference type="EC" id="7.5.2.13"/>
    </reaction>
    <physiologicalReaction direction="left-to-right" evidence="2">
        <dbReference type="Rhea" id="RHEA:29900"/>
    </physiologicalReaction>
</comment>
<comment type="catalytic activity">
    <reaction evidence="2">
        <text>L-arabinose(out) + ATP + H2O = L-arabinose(in) + ADP + phosphate + H(+)</text>
        <dbReference type="Rhea" id="RHEA:30007"/>
        <dbReference type="ChEBI" id="CHEBI:15377"/>
        <dbReference type="ChEBI" id="CHEBI:15378"/>
        <dbReference type="ChEBI" id="CHEBI:17535"/>
        <dbReference type="ChEBI" id="CHEBI:30616"/>
        <dbReference type="ChEBI" id="CHEBI:43474"/>
        <dbReference type="ChEBI" id="CHEBI:456216"/>
        <dbReference type="EC" id="7.5.2.13"/>
    </reaction>
    <physiologicalReaction direction="left-to-right" evidence="2">
        <dbReference type="Rhea" id="RHEA:30008"/>
    </physiologicalReaction>
</comment>
<comment type="subunit">
    <text evidence="5">The complex is composed of two ATP-binding proteins (XacJ and XacK), two transmembrane proteins (XacH and XacI) and a solute-binding protein (XacG).</text>
</comment>
<comment type="subcellular location">
    <subcellularLocation>
        <location evidence="4">Cell membrane</location>
        <topology evidence="4">Peripheral membrane protein</topology>
    </subcellularLocation>
</comment>
<comment type="induction">
    <text evidence="2">Transcriptionally up-regulated by both L-arabinose and D-xylose via the pentose-specific regulator XacR.</text>
</comment>
<comment type="similarity">
    <text evidence="4">Belongs to the ABC transporter superfamily. Carbohydrate uptake transporter-1 (CUT1) (TC 3.A.1.1) family.</text>
</comment>
<protein>
    <recommendedName>
        <fullName evidence="4">Xylose/arabinose import ATP-binding protein XacK</fullName>
        <ecNumber evidence="2">7.5.2.13</ecNumber>
    </recommendedName>
</protein>
<sequence>MARLTLDDVTKVYTDEGGGDIVAVEEISLDIDDGEFLVLVGPSGCGKSTTLRMMAGLETVTEGELRLEDRVLNGVSAQDRDIAMVFQSYALYPHKSVRGNMSFGLEESTGLPDDEIRQRVEETTDMLGISDLLDRKPGQLSGGQQQRVALGRAIVRDPEVFLMDEPLSNLDAKLRAEMRTELQRLQGELGVTTVYVTHDQTEAMTMGDRVAVLDDGELQQVGTPLDCYHRPNNLFVAGFIGEPSMNLFDGSLSGDTFRGDGFDYPLSGATRDQLGGASGLTLGIRPEDVTVGERRSGQRTFDAEVVVVEPQGNENAVHLRFVDGDEGTQFTATTTGQSRVEAGDRTTVSFPEDAIHLFDGETGDALKNRELPSNRAIDAFVSN</sequence>
<dbReference type="EC" id="7.5.2.13" evidence="2"/>
<dbReference type="EMBL" id="CP001953">
    <property type="protein sequence ID" value="ADE01437.1"/>
    <property type="molecule type" value="Genomic_DNA"/>
</dbReference>
<dbReference type="RefSeq" id="WP_004041117.1">
    <property type="nucleotide sequence ID" value="NC_013964.1"/>
</dbReference>
<dbReference type="SMR" id="D4GP39"/>
<dbReference type="TCDB" id="3.A.1.1.56">
    <property type="family name" value="the atp-binding cassette (abc) superfamily"/>
</dbReference>
<dbReference type="PaxDb" id="309800-C498_01570"/>
<dbReference type="EnsemblBacteria" id="ADE01437">
    <property type="protein sequence ID" value="ADE01437"/>
    <property type="gene ID" value="HVO_B0038"/>
</dbReference>
<dbReference type="GeneID" id="8919050"/>
<dbReference type="KEGG" id="hvo:HVO_B0038"/>
<dbReference type="PATRIC" id="fig|309800.29.peg.299"/>
<dbReference type="eggNOG" id="arCOG00177">
    <property type="taxonomic scope" value="Archaea"/>
</dbReference>
<dbReference type="HOGENOM" id="CLU_000604_1_1_2"/>
<dbReference type="OrthoDB" id="18368at2157"/>
<dbReference type="Proteomes" id="UP000008243">
    <property type="component" value="Plasmid pHV3"/>
</dbReference>
<dbReference type="GO" id="GO:0055052">
    <property type="term" value="C:ATP-binding cassette (ABC) transporter complex, substrate-binding subunit-containing"/>
    <property type="evidence" value="ECO:0007669"/>
    <property type="project" value="TreeGrafter"/>
</dbReference>
<dbReference type="GO" id="GO:0015614">
    <property type="term" value="F:ABC-type D-xylose transporter activity"/>
    <property type="evidence" value="ECO:0007669"/>
    <property type="project" value="RHEA"/>
</dbReference>
<dbReference type="GO" id="GO:0015612">
    <property type="term" value="F:ABC-type L-arabinose transporter activity"/>
    <property type="evidence" value="ECO:0007669"/>
    <property type="project" value="RHEA"/>
</dbReference>
<dbReference type="GO" id="GO:0005524">
    <property type="term" value="F:ATP binding"/>
    <property type="evidence" value="ECO:0007669"/>
    <property type="project" value="UniProtKB-KW"/>
</dbReference>
<dbReference type="GO" id="GO:0016887">
    <property type="term" value="F:ATP hydrolysis activity"/>
    <property type="evidence" value="ECO:0007669"/>
    <property type="project" value="InterPro"/>
</dbReference>
<dbReference type="CDD" id="cd03301">
    <property type="entry name" value="ABC_MalK_N"/>
    <property type="match status" value="1"/>
</dbReference>
<dbReference type="FunFam" id="3.40.50.300:FF:000042">
    <property type="entry name" value="Maltose/maltodextrin ABC transporter, ATP-binding protein"/>
    <property type="match status" value="1"/>
</dbReference>
<dbReference type="Gene3D" id="2.40.50.100">
    <property type="match status" value="1"/>
</dbReference>
<dbReference type="Gene3D" id="2.40.50.140">
    <property type="entry name" value="Nucleic acid-binding proteins"/>
    <property type="match status" value="1"/>
</dbReference>
<dbReference type="Gene3D" id="3.40.50.300">
    <property type="entry name" value="P-loop containing nucleotide triphosphate hydrolases"/>
    <property type="match status" value="1"/>
</dbReference>
<dbReference type="InterPro" id="IPR003593">
    <property type="entry name" value="AAA+_ATPase"/>
</dbReference>
<dbReference type="InterPro" id="IPR003439">
    <property type="entry name" value="ABC_transporter-like_ATP-bd"/>
</dbReference>
<dbReference type="InterPro" id="IPR017871">
    <property type="entry name" value="ABC_transporter-like_CS"/>
</dbReference>
<dbReference type="InterPro" id="IPR015855">
    <property type="entry name" value="ABC_transpr_MalK-like"/>
</dbReference>
<dbReference type="InterPro" id="IPR047641">
    <property type="entry name" value="ABC_transpr_MalK/UgpC-like"/>
</dbReference>
<dbReference type="InterPro" id="IPR008995">
    <property type="entry name" value="Mo/tungstate-bd_C_term_dom"/>
</dbReference>
<dbReference type="InterPro" id="IPR012340">
    <property type="entry name" value="NA-bd_OB-fold"/>
</dbReference>
<dbReference type="InterPro" id="IPR027417">
    <property type="entry name" value="P-loop_NTPase"/>
</dbReference>
<dbReference type="InterPro" id="IPR013611">
    <property type="entry name" value="Transp-assoc_OB_typ2"/>
</dbReference>
<dbReference type="NCBIfam" id="NF008653">
    <property type="entry name" value="PRK11650.1"/>
    <property type="match status" value="1"/>
</dbReference>
<dbReference type="PANTHER" id="PTHR43875">
    <property type="entry name" value="MALTODEXTRIN IMPORT ATP-BINDING PROTEIN MSMX"/>
    <property type="match status" value="1"/>
</dbReference>
<dbReference type="PANTHER" id="PTHR43875:SF15">
    <property type="entry name" value="TREHALOSE IMPORT ATP-BINDING PROTEIN SUGC"/>
    <property type="match status" value="1"/>
</dbReference>
<dbReference type="Pfam" id="PF00005">
    <property type="entry name" value="ABC_tran"/>
    <property type="match status" value="1"/>
</dbReference>
<dbReference type="Pfam" id="PF08402">
    <property type="entry name" value="TOBE_2"/>
    <property type="match status" value="1"/>
</dbReference>
<dbReference type="SMART" id="SM00382">
    <property type="entry name" value="AAA"/>
    <property type="match status" value="1"/>
</dbReference>
<dbReference type="SUPFAM" id="SSF50331">
    <property type="entry name" value="MOP-like"/>
    <property type="match status" value="1"/>
</dbReference>
<dbReference type="SUPFAM" id="SSF52540">
    <property type="entry name" value="P-loop containing nucleoside triphosphate hydrolases"/>
    <property type="match status" value="1"/>
</dbReference>
<dbReference type="PROSITE" id="PS00211">
    <property type="entry name" value="ABC_TRANSPORTER_1"/>
    <property type="match status" value="1"/>
</dbReference>
<dbReference type="PROSITE" id="PS50893">
    <property type="entry name" value="ABC_TRANSPORTER_2"/>
    <property type="match status" value="1"/>
</dbReference>
<reference key="1">
    <citation type="journal article" date="2010" name="PLoS ONE">
        <title>The complete genome sequence of Haloferax volcanii DS2, a model archaeon.</title>
        <authorList>
            <person name="Hartman A.L."/>
            <person name="Norais C."/>
            <person name="Badger J.H."/>
            <person name="Delmas S."/>
            <person name="Haldenby S."/>
            <person name="Madupu R."/>
            <person name="Robinson J."/>
            <person name="Khouri H."/>
            <person name="Ren Q."/>
            <person name="Lowe T.M."/>
            <person name="Maupin-Furlow J."/>
            <person name="Pohlschroder M."/>
            <person name="Daniels C."/>
            <person name="Pfeiffer F."/>
            <person name="Allers T."/>
            <person name="Eisen J.A."/>
        </authorList>
    </citation>
    <scope>NUCLEOTIDE SEQUENCE [LARGE SCALE GENOMIC DNA]</scope>
    <source>
        <strain>ATCC 29605 / DSM 3757 / JCM 8879 / NBRC 14742 / NCIMB 2012 / VKM B-1768 / DS2</strain>
    </source>
</reference>
<reference key="2">
    <citation type="journal article" date="2019" name="FEMS Microbiol. Lett.">
        <title>Uptake of D-xylose and L-arabinose in Haloferax volcanii involves an ABC transporter of the CUT1 subfamily.</title>
        <authorList>
            <person name="Johnsen U."/>
            <person name="Ortjohann M."/>
            <person name="Sutter J.M."/>
            <person name="Geweke S."/>
            <person name="Schoenheit P."/>
        </authorList>
    </citation>
    <scope>FUNCTION</scope>
    <scope>CATALYTIC ACTIVITY</scope>
    <scope>SUBUNIT</scope>
    <scope>INDUCTION</scope>
    <source>
        <strain>DS2 / DS70 / H26</strain>
    </source>
</reference>